<feature type="chain" id="PRO_0000372229" description="Putative antiporter subunit mnhD2">
    <location>
        <begin position="1"/>
        <end position="498"/>
    </location>
</feature>
<feature type="transmembrane region" description="Helical" evidence="2">
    <location>
        <begin position="2"/>
        <end position="22"/>
    </location>
</feature>
<feature type="transmembrane region" description="Helical" evidence="2">
    <location>
        <begin position="32"/>
        <end position="52"/>
    </location>
</feature>
<feature type="transmembrane region" description="Helical" evidence="2">
    <location>
        <begin position="78"/>
        <end position="98"/>
    </location>
</feature>
<feature type="transmembrane region" description="Helical" evidence="2">
    <location>
        <begin position="108"/>
        <end position="128"/>
    </location>
</feature>
<feature type="transmembrane region" description="Helical" evidence="2">
    <location>
        <begin position="130"/>
        <end position="150"/>
    </location>
</feature>
<feature type="transmembrane region" description="Helical" evidence="2">
    <location>
        <begin position="161"/>
        <end position="181"/>
    </location>
</feature>
<feature type="transmembrane region" description="Helical" evidence="2">
    <location>
        <begin position="209"/>
        <end position="229"/>
    </location>
</feature>
<feature type="transmembrane region" description="Helical" evidence="2">
    <location>
        <begin position="240"/>
        <end position="260"/>
    </location>
</feature>
<feature type="transmembrane region" description="Helical" evidence="2">
    <location>
        <begin position="271"/>
        <end position="291"/>
    </location>
</feature>
<feature type="transmembrane region" description="Helical" evidence="2">
    <location>
        <begin position="308"/>
        <end position="328"/>
    </location>
</feature>
<feature type="transmembrane region" description="Helical" evidence="2">
    <location>
        <begin position="330"/>
        <end position="350"/>
    </location>
</feature>
<feature type="transmembrane region" description="Helical" evidence="2">
    <location>
        <begin position="369"/>
        <end position="389"/>
    </location>
</feature>
<feature type="transmembrane region" description="Helical" evidence="2">
    <location>
        <begin position="403"/>
        <end position="423"/>
    </location>
</feature>
<feature type="transmembrane region" description="Helical" evidence="2">
    <location>
        <begin position="451"/>
        <end position="471"/>
    </location>
</feature>
<dbReference type="EMBL" id="AJ938182">
    <property type="protein sequence ID" value="CAI80264.1"/>
    <property type="molecule type" value="Genomic_DNA"/>
</dbReference>
<dbReference type="RefSeq" id="WP_000950548.1">
    <property type="nucleotide sequence ID" value="NC_007622.1"/>
</dbReference>
<dbReference type="SMR" id="Q2YSV4"/>
<dbReference type="KEGG" id="sab:SAB0576"/>
<dbReference type="HOGENOM" id="CLU_007100_9_2_9"/>
<dbReference type="GO" id="GO:0005886">
    <property type="term" value="C:plasma membrane"/>
    <property type="evidence" value="ECO:0007669"/>
    <property type="project" value="UniProtKB-SubCell"/>
</dbReference>
<dbReference type="GO" id="GO:0015297">
    <property type="term" value="F:antiporter activity"/>
    <property type="evidence" value="ECO:0007669"/>
    <property type="project" value="UniProtKB-KW"/>
</dbReference>
<dbReference type="GO" id="GO:0008137">
    <property type="term" value="F:NADH dehydrogenase (ubiquinone) activity"/>
    <property type="evidence" value="ECO:0007669"/>
    <property type="project" value="InterPro"/>
</dbReference>
<dbReference type="GO" id="GO:0042773">
    <property type="term" value="P:ATP synthesis coupled electron transport"/>
    <property type="evidence" value="ECO:0007669"/>
    <property type="project" value="InterPro"/>
</dbReference>
<dbReference type="InterPro" id="IPR050586">
    <property type="entry name" value="CPA3_Na-H_Antiporter_D"/>
</dbReference>
<dbReference type="InterPro" id="IPR003918">
    <property type="entry name" value="NADH_UbQ_OxRdtase"/>
</dbReference>
<dbReference type="InterPro" id="IPR001750">
    <property type="entry name" value="ND/Mrp_TM"/>
</dbReference>
<dbReference type="NCBIfam" id="NF009306">
    <property type="entry name" value="PRK12663.1"/>
    <property type="match status" value="1"/>
</dbReference>
<dbReference type="PANTHER" id="PTHR42703:SF1">
    <property type="entry name" value="NA(+)_H(+) ANTIPORTER SUBUNIT D1"/>
    <property type="match status" value="1"/>
</dbReference>
<dbReference type="PANTHER" id="PTHR42703">
    <property type="entry name" value="NADH DEHYDROGENASE"/>
    <property type="match status" value="1"/>
</dbReference>
<dbReference type="Pfam" id="PF00361">
    <property type="entry name" value="Proton_antipo_M"/>
    <property type="match status" value="1"/>
</dbReference>
<dbReference type="PRINTS" id="PR01437">
    <property type="entry name" value="NUOXDRDTASE4"/>
</dbReference>
<protein>
    <recommendedName>
        <fullName>Putative antiporter subunit mnhD2</fullName>
    </recommendedName>
    <alternativeName>
        <fullName>Mrp complex subunit D2</fullName>
    </alternativeName>
    <alternativeName>
        <fullName>Putative NADH-ubiquinone oxidoreductase subunit mnhD2</fullName>
    </alternativeName>
</protein>
<gene>
    <name type="primary">mnhD2</name>
    <name type="synonym">mrpD2</name>
    <name type="ordered locus">SAB0576</name>
</gene>
<proteinExistence type="inferred from homology"/>
<comment type="subunit">
    <text evidence="1">May form a heterooligomeric complex that consists of seven subunits: mnhA2, mnhB2, mnhC2, mnhD2, mnhE2, mnhF2 and mnhG2.</text>
</comment>
<comment type="subcellular location">
    <subcellularLocation>
        <location evidence="3">Cell membrane</location>
        <topology evidence="3">Multi-pass membrane protein</topology>
    </subcellularLocation>
</comment>
<comment type="similarity">
    <text evidence="3">Belongs to the CPA3 antiporters (TC 2.A.63) subunit D family.</text>
</comment>
<organism>
    <name type="scientific">Staphylococcus aureus (strain bovine RF122 / ET3-1)</name>
    <dbReference type="NCBI Taxonomy" id="273036"/>
    <lineage>
        <taxon>Bacteria</taxon>
        <taxon>Bacillati</taxon>
        <taxon>Bacillota</taxon>
        <taxon>Bacilli</taxon>
        <taxon>Bacillales</taxon>
        <taxon>Staphylococcaceae</taxon>
        <taxon>Staphylococcus</taxon>
    </lineage>
</organism>
<evidence type="ECO:0000250" key="1"/>
<evidence type="ECO:0000255" key="2"/>
<evidence type="ECO:0000305" key="3"/>
<sequence>MLSNLLILPMLLPFLCALILVFLKNNDRISKYLYLGTMTITTIISLMLLIYVQRHRPITLDFGGWSAPFGIQFLGDSLSLIMVTTASFVITLIMAYGFGRGEHKANRYHLPSFILFLSVGVIGSFLTSDLFNLYVMFEIMLLASFVLITLGQSVEQLRAAIIYVVLNIIGSWLFLLGIGLLYKTVGTLNFSHIAMRLNDMGDNRTVTMISLIFLVAFSAKAALVLFMWLPKAYAVLNTELAALFAALMTKVGAYALIRFFTLLFDQHNDLIHPLLATMAAITMVIGAIGVIAYKDIKKIAAYQVIISIGFIILGLGTNTFAGINGAIFYLVNDIVVKTLLFFIIGSLVYITGYRQYQYLNGLAKKEPLFGVAFIIMIFAIGGVPPFSGFPGKVLIFQGALQNGNYIGLALMIITSLIAMYSLFRILFYMYFGDKDGEEVNFKKIPLYRKRILSILVVVVIAIGIAAPVVLNVTSDATELNTSDQLYQKLVNPHLKGED</sequence>
<name>MNHD2_STAAB</name>
<accession>Q2YSV4</accession>
<keyword id="KW-0050">Antiport</keyword>
<keyword id="KW-1003">Cell membrane</keyword>
<keyword id="KW-0406">Ion transport</keyword>
<keyword id="KW-0472">Membrane</keyword>
<keyword id="KW-0812">Transmembrane</keyword>
<keyword id="KW-1133">Transmembrane helix</keyword>
<keyword id="KW-0813">Transport</keyword>
<reference key="1">
    <citation type="journal article" date="2007" name="PLoS ONE">
        <title>Molecular correlates of host specialization in Staphylococcus aureus.</title>
        <authorList>
            <person name="Herron-Olson L."/>
            <person name="Fitzgerald J.R."/>
            <person name="Musser J.M."/>
            <person name="Kapur V."/>
        </authorList>
    </citation>
    <scope>NUCLEOTIDE SEQUENCE [LARGE SCALE GENOMIC DNA]</scope>
    <source>
        <strain>bovine RF122 / ET3-1</strain>
    </source>
</reference>